<comment type="function">
    <text>B.japonicum has two FixLJ-dependent FixK homologs that are activators of the transcription of a group of genes involved in anaerobic processes such as denitrification and possibly nitrogen fixation. FixK may bind DNA at the FNR consensus binding site.</text>
</comment>
<comment type="induction">
    <text>Its expression is maximal under reduced oxygen conditions and depends on the two-component regulatory system FixLJ.</text>
</comment>
<comment type="miscellaneous">
    <text>Possesses 4 cysteines which may bind a metal ion (possibly iron).</text>
</comment>
<gene>
    <name type="primary">fixK</name>
    <name type="ordered locus">bll6061</name>
</gene>
<keyword id="KW-0010">Activator</keyword>
<keyword id="KW-0238">DNA-binding</keyword>
<keyword id="KW-0535">Nitrogen fixation</keyword>
<keyword id="KW-1185">Reference proteome</keyword>
<keyword id="KW-0804">Transcription</keyword>
<keyword id="KW-0805">Transcription regulation</keyword>
<proteinExistence type="evidence at transcript level"/>
<reference key="1">
    <citation type="journal article" date="1992" name="J. Bacteriol.">
        <title>Characterization of a fixLJ-regulated Bradyrhizobium japonicum gene sharing similarity with the Escherichia coli fnr and Rhizobium meliloti fixK genes.</title>
        <authorList>
            <person name="Anthamatten D."/>
            <person name="Scherb B."/>
            <person name="Hennecke H."/>
        </authorList>
    </citation>
    <scope>NUCLEOTIDE SEQUENCE [GENOMIC DNA]</scope>
    <source>
        <strain>USDA 110spc4</strain>
    </source>
</reference>
<reference key="2">
    <citation type="journal article" date="2002" name="DNA Res.">
        <title>Complete genomic sequence of nitrogen-fixing symbiotic bacterium Bradyrhizobium japonicum USDA110.</title>
        <authorList>
            <person name="Kaneko T."/>
            <person name="Nakamura Y."/>
            <person name="Sato S."/>
            <person name="Minamisawa K."/>
            <person name="Uchiumi T."/>
            <person name="Sasamoto S."/>
            <person name="Watanabe A."/>
            <person name="Idesawa K."/>
            <person name="Iriguchi M."/>
            <person name="Kawashima K."/>
            <person name="Kohara M."/>
            <person name="Matsumoto M."/>
            <person name="Shimpo S."/>
            <person name="Tsuruoka H."/>
            <person name="Wada T."/>
            <person name="Yamada M."/>
            <person name="Tabata S."/>
        </authorList>
    </citation>
    <scope>NUCLEOTIDE SEQUENCE [LARGE SCALE GENOMIC DNA]</scope>
    <source>
        <strain>JCM 10833 / BCRC 13528 / IAM 13628 / NBRC 14792 / USDA 110</strain>
    </source>
</reference>
<accession>P29286</accession>
<organism>
    <name type="scientific">Bradyrhizobium diazoefficiens (strain JCM 10833 / BCRC 13528 / IAM 13628 / NBRC 14792 / USDA 110)</name>
    <dbReference type="NCBI Taxonomy" id="224911"/>
    <lineage>
        <taxon>Bacteria</taxon>
        <taxon>Pseudomonadati</taxon>
        <taxon>Pseudomonadota</taxon>
        <taxon>Alphaproteobacteria</taxon>
        <taxon>Hyphomicrobiales</taxon>
        <taxon>Nitrobacteraceae</taxon>
        <taxon>Bradyrhizobium</taxon>
    </lineage>
</organism>
<protein>
    <recommendedName>
        <fullName>Nitrogen fixation regulation protein FixK</fullName>
    </recommendedName>
</protein>
<sequence>MKPSVVMIEPNGHFCSDCAIRTSAVCSSLDAAELREFEHLGRRVHFSSGETVFSEEDITTSFYNVLEGVMRLYKLLPDGRRQIVGFALPGDFLGMNLSGRHNFSADAIGAVTVCQFAKAPFGRFIEERPQLLRRINELAIRELSQARDHMVLLGRRSADEKVAAFLLGWRERLLALKGASDTVPLPMSRQDIADYLGLTIETVSRTFTKLERHGAIAIIHGGISLLDPARVEALAAA</sequence>
<dbReference type="EMBL" id="M86805">
    <property type="protein sequence ID" value="AAA26209.1"/>
    <property type="molecule type" value="Genomic_DNA"/>
</dbReference>
<dbReference type="EMBL" id="BA000040">
    <property type="protein sequence ID" value="BAC51326.1"/>
    <property type="molecule type" value="Genomic_DNA"/>
</dbReference>
<dbReference type="PIR" id="B42371">
    <property type="entry name" value="B42371"/>
</dbReference>
<dbReference type="RefSeq" id="NP_772701.1">
    <property type="nucleotide sequence ID" value="NC_004463.1"/>
</dbReference>
<dbReference type="RefSeq" id="WP_011088802.1">
    <property type="nucleotide sequence ID" value="NC_004463.1"/>
</dbReference>
<dbReference type="SMR" id="P29286"/>
<dbReference type="FunCoup" id="P29286">
    <property type="interactions" value="340"/>
</dbReference>
<dbReference type="STRING" id="224911.AAV28_27835"/>
<dbReference type="EnsemblBacteria" id="BAC51326">
    <property type="protein sequence ID" value="BAC51326"/>
    <property type="gene ID" value="BAC51326"/>
</dbReference>
<dbReference type="GeneID" id="46493055"/>
<dbReference type="KEGG" id="bja:bll6061"/>
<dbReference type="PATRIC" id="fig|224911.44.peg.6014"/>
<dbReference type="eggNOG" id="COG0664">
    <property type="taxonomic scope" value="Bacteria"/>
</dbReference>
<dbReference type="HOGENOM" id="CLU_075053_0_1_5"/>
<dbReference type="InParanoid" id="P29286"/>
<dbReference type="OrthoDB" id="667966at2"/>
<dbReference type="PhylomeDB" id="P29286"/>
<dbReference type="Proteomes" id="UP000002526">
    <property type="component" value="Chromosome"/>
</dbReference>
<dbReference type="GO" id="GO:0005829">
    <property type="term" value="C:cytosol"/>
    <property type="evidence" value="ECO:0000318"/>
    <property type="project" value="GO_Central"/>
</dbReference>
<dbReference type="GO" id="GO:0003677">
    <property type="term" value="F:DNA binding"/>
    <property type="evidence" value="ECO:0007669"/>
    <property type="project" value="UniProtKB-KW"/>
</dbReference>
<dbReference type="GO" id="GO:0003700">
    <property type="term" value="F:DNA-binding transcription factor activity"/>
    <property type="evidence" value="ECO:0000318"/>
    <property type="project" value="GO_Central"/>
</dbReference>
<dbReference type="GO" id="GO:0009399">
    <property type="term" value="P:nitrogen fixation"/>
    <property type="evidence" value="ECO:0007669"/>
    <property type="project" value="UniProtKB-KW"/>
</dbReference>
<dbReference type="CDD" id="cd00038">
    <property type="entry name" value="CAP_ED"/>
    <property type="match status" value="1"/>
</dbReference>
<dbReference type="CDD" id="cd00092">
    <property type="entry name" value="HTH_CRP"/>
    <property type="match status" value="1"/>
</dbReference>
<dbReference type="FunFam" id="1.10.10.10:FF:000028">
    <property type="entry name" value="Fumarate/nitrate reduction transcriptional regulator Fnr"/>
    <property type="match status" value="1"/>
</dbReference>
<dbReference type="FunFam" id="2.60.120.10:FF:000129">
    <property type="entry name" value="Transcriptional regulator FixK"/>
    <property type="match status" value="1"/>
</dbReference>
<dbReference type="Gene3D" id="2.60.120.10">
    <property type="entry name" value="Jelly Rolls"/>
    <property type="match status" value="1"/>
</dbReference>
<dbReference type="Gene3D" id="1.10.10.10">
    <property type="entry name" value="Winged helix-like DNA-binding domain superfamily/Winged helix DNA-binding domain"/>
    <property type="match status" value="1"/>
</dbReference>
<dbReference type="InterPro" id="IPR000595">
    <property type="entry name" value="cNMP-bd_dom"/>
</dbReference>
<dbReference type="InterPro" id="IPR018490">
    <property type="entry name" value="cNMP-bd_dom_sf"/>
</dbReference>
<dbReference type="InterPro" id="IPR050397">
    <property type="entry name" value="Env_Response_Regulators"/>
</dbReference>
<dbReference type="InterPro" id="IPR012318">
    <property type="entry name" value="HTH_CRP"/>
</dbReference>
<dbReference type="InterPro" id="IPR014710">
    <property type="entry name" value="RmlC-like_jellyroll"/>
</dbReference>
<dbReference type="InterPro" id="IPR018335">
    <property type="entry name" value="Tscrpt_reg_HTH_Crp-type_CS"/>
</dbReference>
<dbReference type="InterPro" id="IPR036388">
    <property type="entry name" value="WH-like_DNA-bd_sf"/>
</dbReference>
<dbReference type="InterPro" id="IPR036390">
    <property type="entry name" value="WH_DNA-bd_sf"/>
</dbReference>
<dbReference type="PANTHER" id="PTHR24567">
    <property type="entry name" value="CRP FAMILY TRANSCRIPTIONAL REGULATORY PROTEIN"/>
    <property type="match status" value="1"/>
</dbReference>
<dbReference type="PANTHER" id="PTHR24567:SF75">
    <property type="entry name" value="FUMARATE AND NITRATE REDUCTION REGULATORY PROTEIN"/>
    <property type="match status" value="1"/>
</dbReference>
<dbReference type="Pfam" id="PF00027">
    <property type="entry name" value="cNMP_binding"/>
    <property type="match status" value="1"/>
</dbReference>
<dbReference type="Pfam" id="PF13545">
    <property type="entry name" value="HTH_Crp_2"/>
    <property type="match status" value="1"/>
</dbReference>
<dbReference type="PRINTS" id="PR00034">
    <property type="entry name" value="HTHCRP"/>
</dbReference>
<dbReference type="SMART" id="SM00100">
    <property type="entry name" value="cNMP"/>
    <property type="match status" value="1"/>
</dbReference>
<dbReference type="SMART" id="SM00419">
    <property type="entry name" value="HTH_CRP"/>
    <property type="match status" value="1"/>
</dbReference>
<dbReference type="SUPFAM" id="SSF51206">
    <property type="entry name" value="cAMP-binding domain-like"/>
    <property type="match status" value="1"/>
</dbReference>
<dbReference type="SUPFAM" id="SSF46785">
    <property type="entry name" value="Winged helix' DNA-binding domain"/>
    <property type="match status" value="1"/>
</dbReference>
<dbReference type="PROSITE" id="PS50042">
    <property type="entry name" value="CNMP_BINDING_3"/>
    <property type="match status" value="1"/>
</dbReference>
<dbReference type="PROSITE" id="PS00042">
    <property type="entry name" value="HTH_CRP_1"/>
    <property type="match status" value="1"/>
</dbReference>
<dbReference type="PROSITE" id="PS51063">
    <property type="entry name" value="HTH_CRP_2"/>
    <property type="match status" value="1"/>
</dbReference>
<name>FIXK_BRADU</name>
<feature type="chain" id="PRO_0000100157" description="Nitrogen fixation regulation protein FixK">
    <location>
        <begin position="1"/>
        <end position="237"/>
    </location>
</feature>
<feature type="domain" description="HTH crp-type" evidence="1">
    <location>
        <begin position="156"/>
        <end position="229"/>
    </location>
</feature>
<feature type="DNA-binding region" description="H-T-H motif" evidence="1">
    <location>
        <begin position="189"/>
        <end position="208"/>
    </location>
</feature>
<evidence type="ECO:0000255" key="1">
    <source>
        <dbReference type="PROSITE-ProRule" id="PRU00387"/>
    </source>
</evidence>